<dbReference type="EMBL" id="CR382133">
    <property type="protein sequence ID" value="CAG84891.1"/>
    <property type="molecule type" value="Genomic_DNA"/>
</dbReference>
<dbReference type="RefSeq" id="XP_456914.1">
    <property type="nucleotide sequence ID" value="XM_456914.1"/>
</dbReference>
<dbReference type="SMR" id="Q6BY05"/>
<dbReference type="FunCoup" id="Q6BY05">
    <property type="interactions" value="152"/>
</dbReference>
<dbReference type="STRING" id="284592.Q6BY05"/>
<dbReference type="GeneID" id="2899437"/>
<dbReference type="KEGG" id="dha:DEHA2A13442g"/>
<dbReference type="VEuPathDB" id="FungiDB:DEHA2A13442g"/>
<dbReference type="eggNOG" id="ENOG502S9GT">
    <property type="taxonomic scope" value="Eukaryota"/>
</dbReference>
<dbReference type="HOGENOM" id="CLU_131611_1_0_1"/>
<dbReference type="InParanoid" id="Q6BY05"/>
<dbReference type="OMA" id="VNMKDEY"/>
<dbReference type="OrthoDB" id="5516033at2759"/>
<dbReference type="Proteomes" id="UP000000599">
    <property type="component" value="Chromosome A"/>
</dbReference>
<dbReference type="GO" id="GO:0005743">
    <property type="term" value="C:mitochondrial inner membrane"/>
    <property type="evidence" value="ECO:0007669"/>
    <property type="project" value="UniProtKB-SubCell"/>
</dbReference>
<dbReference type="GO" id="GO:0033617">
    <property type="term" value="P:mitochondrial cytochrome c oxidase assembly"/>
    <property type="evidence" value="ECO:0007669"/>
    <property type="project" value="EnsemblFungi"/>
</dbReference>
<dbReference type="InterPro" id="IPR020164">
    <property type="entry name" value="Cyt_c_Oxase_assmbl_COX16"/>
</dbReference>
<dbReference type="PANTHER" id="PTHR17130:SF14">
    <property type="entry name" value="CYTOCHROME C OXIDASE ASSEMBLY PROTEIN COX16 HOMOLOG, MITOCHONDRIAL"/>
    <property type="match status" value="1"/>
</dbReference>
<dbReference type="PANTHER" id="PTHR17130">
    <property type="entry name" value="MITOCHONDRIAL OUTER MEMBRANE PROTEIN 25"/>
    <property type="match status" value="1"/>
</dbReference>
<dbReference type="Pfam" id="PF14138">
    <property type="entry name" value="COX16"/>
    <property type="match status" value="1"/>
</dbReference>
<protein>
    <recommendedName>
        <fullName>Cytochrome c oxidase assembly protein COX16, mitochondrial</fullName>
    </recommendedName>
</protein>
<reference key="1">
    <citation type="journal article" date="2004" name="Nature">
        <title>Genome evolution in yeasts.</title>
        <authorList>
            <person name="Dujon B."/>
            <person name="Sherman D."/>
            <person name="Fischer G."/>
            <person name="Durrens P."/>
            <person name="Casaregola S."/>
            <person name="Lafontaine I."/>
            <person name="de Montigny J."/>
            <person name="Marck C."/>
            <person name="Neuveglise C."/>
            <person name="Talla E."/>
            <person name="Goffard N."/>
            <person name="Frangeul L."/>
            <person name="Aigle M."/>
            <person name="Anthouard V."/>
            <person name="Babour A."/>
            <person name="Barbe V."/>
            <person name="Barnay S."/>
            <person name="Blanchin S."/>
            <person name="Beckerich J.-M."/>
            <person name="Beyne E."/>
            <person name="Bleykasten C."/>
            <person name="Boisrame A."/>
            <person name="Boyer J."/>
            <person name="Cattolico L."/>
            <person name="Confanioleri F."/>
            <person name="de Daruvar A."/>
            <person name="Despons L."/>
            <person name="Fabre E."/>
            <person name="Fairhead C."/>
            <person name="Ferry-Dumazet H."/>
            <person name="Groppi A."/>
            <person name="Hantraye F."/>
            <person name="Hennequin C."/>
            <person name="Jauniaux N."/>
            <person name="Joyet P."/>
            <person name="Kachouri R."/>
            <person name="Kerrest A."/>
            <person name="Koszul R."/>
            <person name="Lemaire M."/>
            <person name="Lesur I."/>
            <person name="Ma L."/>
            <person name="Muller H."/>
            <person name="Nicaud J.-M."/>
            <person name="Nikolski M."/>
            <person name="Oztas S."/>
            <person name="Ozier-Kalogeropoulos O."/>
            <person name="Pellenz S."/>
            <person name="Potier S."/>
            <person name="Richard G.-F."/>
            <person name="Straub M.-L."/>
            <person name="Suleau A."/>
            <person name="Swennen D."/>
            <person name="Tekaia F."/>
            <person name="Wesolowski-Louvel M."/>
            <person name="Westhof E."/>
            <person name="Wirth B."/>
            <person name="Zeniou-Meyer M."/>
            <person name="Zivanovic Y."/>
            <person name="Bolotin-Fukuhara M."/>
            <person name="Thierry A."/>
            <person name="Bouchier C."/>
            <person name="Caudron B."/>
            <person name="Scarpelli C."/>
            <person name="Gaillardin C."/>
            <person name="Weissenbach J."/>
            <person name="Wincker P."/>
            <person name="Souciet J.-L."/>
        </authorList>
    </citation>
    <scope>NUCLEOTIDE SEQUENCE [LARGE SCALE GENOMIC DNA]</scope>
    <source>
        <strain>ATCC 36239 / CBS 767 / BCRC 21394 / JCM 1990 / NBRC 0083 / IGC 2968</strain>
    </source>
</reference>
<evidence type="ECO:0000250" key="1">
    <source>
        <dbReference type="UniProtKB" id="P47081"/>
    </source>
</evidence>
<evidence type="ECO:0000255" key="2"/>
<evidence type="ECO:0000305" key="3"/>
<comment type="function">
    <text evidence="1">Required for the assembly of the mitochondrial respiratory chain complex IV (CIV), also known as cytochrome c oxidase. May participate in merging the COX1 and COX2 assembly lines.</text>
</comment>
<comment type="subcellular location">
    <subcellularLocation>
        <location evidence="1">Mitochondrion inner membrane</location>
        <topology evidence="1">Single-pass membrane protein</topology>
    </subcellularLocation>
</comment>
<comment type="similarity">
    <text evidence="3">Belongs to the COX16 family.</text>
</comment>
<keyword id="KW-0472">Membrane</keyword>
<keyword id="KW-0496">Mitochondrion</keyword>
<keyword id="KW-0999">Mitochondrion inner membrane</keyword>
<keyword id="KW-1185">Reference proteome</keyword>
<keyword id="KW-0809">Transit peptide</keyword>
<keyword id="KW-0812">Transmembrane</keyword>
<keyword id="KW-1133">Transmembrane helix</keyword>
<sequence>MVHLGSKPFRGKREQEAYDRTYAGRYQKLLRKNHFLYFGLPFILSIVAGSLYLQKFTAVKWEKYDERYRQVGEEEMLSMIENKRPVDKKNDYYRLQGLLHDHENEVSSNEDYEIVRVKRKKEDEPVW</sequence>
<feature type="transit peptide" description="Mitochondrion" evidence="2">
    <location>
        <begin position="1"/>
        <end status="unknown"/>
    </location>
</feature>
<feature type="chain" id="PRO_0000280646" description="Cytochrome c oxidase assembly protein COX16, mitochondrial">
    <location>
        <begin status="unknown"/>
        <end position="127"/>
    </location>
</feature>
<feature type="transmembrane region" description="Helical" evidence="2">
    <location>
        <begin position="34"/>
        <end position="53"/>
    </location>
</feature>
<proteinExistence type="inferred from homology"/>
<accession>Q6BY05</accession>
<gene>
    <name type="primary">COX16</name>
    <name type="ordered locus">DEHA2A13442g</name>
</gene>
<name>COX16_DEBHA</name>
<organism>
    <name type="scientific">Debaryomyces hansenii (strain ATCC 36239 / CBS 767 / BCRC 21394 / JCM 1990 / NBRC 0083 / IGC 2968)</name>
    <name type="common">Yeast</name>
    <name type="synonym">Torulaspora hansenii</name>
    <dbReference type="NCBI Taxonomy" id="284592"/>
    <lineage>
        <taxon>Eukaryota</taxon>
        <taxon>Fungi</taxon>
        <taxon>Dikarya</taxon>
        <taxon>Ascomycota</taxon>
        <taxon>Saccharomycotina</taxon>
        <taxon>Pichiomycetes</taxon>
        <taxon>Debaryomycetaceae</taxon>
        <taxon>Debaryomyces</taxon>
    </lineage>
</organism>